<evidence type="ECO:0000255" key="1">
    <source>
        <dbReference type="HAMAP-Rule" id="MF_01334"/>
    </source>
</evidence>
<evidence type="ECO:0000256" key="2">
    <source>
        <dbReference type="SAM" id="MobiDB-lite"/>
    </source>
</evidence>
<evidence type="ECO:0000305" key="3"/>
<proteinExistence type="inferred from homology"/>
<feature type="chain" id="PRO_0000181599" description="Large ribosomal subunit protein bL25">
    <location>
        <begin position="1"/>
        <end position="219"/>
    </location>
</feature>
<feature type="region of interest" description="Disordered" evidence="2">
    <location>
        <begin position="176"/>
        <end position="219"/>
    </location>
</feature>
<feature type="compositionally biased region" description="Acidic residues" evidence="2">
    <location>
        <begin position="184"/>
        <end position="219"/>
    </location>
</feature>
<accession>Q5HRQ4</accession>
<keyword id="KW-1185">Reference proteome</keyword>
<keyword id="KW-0687">Ribonucleoprotein</keyword>
<keyword id="KW-0689">Ribosomal protein</keyword>
<keyword id="KW-0694">RNA-binding</keyword>
<keyword id="KW-0699">rRNA-binding</keyword>
<dbReference type="EMBL" id="CP000029">
    <property type="protein sequence ID" value="AAW53491.1"/>
    <property type="molecule type" value="Genomic_DNA"/>
</dbReference>
<dbReference type="RefSeq" id="WP_001832185.1">
    <property type="nucleotide sequence ID" value="NC_002976.3"/>
</dbReference>
<dbReference type="SMR" id="Q5HRQ4"/>
<dbReference type="STRING" id="176279.SERP0139"/>
<dbReference type="KEGG" id="ser:SERP0139"/>
<dbReference type="eggNOG" id="COG1825">
    <property type="taxonomic scope" value="Bacteria"/>
</dbReference>
<dbReference type="HOGENOM" id="CLU_075939_2_0_9"/>
<dbReference type="Proteomes" id="UP000000531">
    <property type="component" value="Chromosome"/>
</dbReference>
<dbReference type="GO" id="GO:0022625">
    <property type="term" value="C:cytosolic large ribosomal subunit"/>
    <property type="evidence" value="ECO:0007669"/>
    <property type="project" value="TreeGrafter"/>
</dbReference>
<dbReference type="GO" id="GO:0008097">
    <property type="term" value="F:5S rRNA binding"/>
    <property type="evidence" value="ECO:0007669"/>
    <property type="project" value="InterPro"/>
</dbReference>
<dbReference type="GO" id="GO:0003735">
    <property type="term" value="F:structural constituent of ribosome"/>
    <property type="evidence" value="ECO:0007669"/>
    <property type="project" value="InterPro"/>
</dbReference>
<dbReference type="GO" id="GO:0006412">
    <property type="term" value="P:translation"/>
    <property type="evidence" value="ECO:0007669"/>
    <property type="project" value="UniProtKB-UniRule"/>
</dbReference>
<dbReference type="CDD" id="cd00495">
    <property type="entry name" value="Ribosomal_L25_TL5_CTC"/>
    <property type="match status" value="1"/>
</dbReference>
<dbReference type="FunFam" id="2.40.240.10:FF:000013">
    <property type="entry name" value="50S ribosomal protein L25"/>
    <property type="match status" value="1"/>
</dbReference>
<dbReference type="Gene3D" id="2.170.120.20">
    <property type="entry name" value="Ribosomal protein L25, beta domain"/>
    <property type="match status" value="1"/>
</dbReference>
<dbReference type="Gene3D" id="2.40.240.10">
    <property type="entry name" value="Ribosomal Protein L25, Chain P"/>
    <property type="match status" value="1"/>
</dbReference>
<dbReference type="HAMAP" id="MF_01334">
    <property type="entry name" value="Ribosomal_bL25_CTC"/>
    <property type="match status" value="1"/>
</dbReference>
<dbReference type="InterPro" id="IPR020056">
    <property type="entry name" value="Rbsml_bL25/Gln-tRNA_synth_N"/>
</dbReference>
<dbReference type="InterPro" id="IPR011035">
    <property type="entry name" value="Ribosomal_bL25/Gln-tRNA_synth"/>
</dbReference>
<dbReference type="InterPro" id="IPR020057">
    <property type="entry name" value="Ribosomal_bL25_b-dom"/>
</dbReference>
<dbReference type="InterPro" id="IPR037121">
    <property type="entry name" value="Ribosomal_bL25_C"/>
</dbReference>
<dbReference type="InterPro" id="IPR001021">
    <property type="entry name" value="Ribosomal_bL25_long"/>
</dbReference>
<dbReference type="InterPro" id="IPR029751">
    <property type="entry name" value="Ribosomal_L25_dom"/>
</dbReference>
<dbReference type="InterPro" id="IPR020930">
    <property type="entry name" value="Ribosomal_uL5_bac-type"/>
</dbReference>
<dbReference type="NCBIfam" id="TIGR00731">
    <property type="entry name" value="bL25_bact_ctc"/>
    <property type="match status" value="1"/>
</dbReference>
<dbReference type="NCBIfam" id="NF004133">
    <property type="entry name" value="PRK05618.2-4"/>
    <property type="match status" value="1"/>
</dbReference>
<dbReference type="NCBIfam" id="NF004134">
    <property type="entry name" value="PRK05618.2-5"/>
    <property type="match status" value="1"/>
</dbReference>
<dbReference type="PANTHER" id="PTHR33284">
    <property type="entry name" value="RIBOSOMAL PROTEIN L25/GLN-TRNA SYNTHETASE, ANTI-CODON-BINDING DOMAIN-CONTAINING PROTEIN"/>
    <property type="match status" value="1"/>
</dbReference>
<dbReference type="PANTHER" id="PTHR33284:SF1">
    <property type="entry name" value="RIBOSOMAL PROTEIN L25_GLN-TRNA SYNTHETASE, ANTI-CODON-BINDING DOMAIN-CONTAINING PROTEIN"/>
    <property type="match status" value="1"/>
</dbReference>
<dbReference type="Pfam" id="PF01386">
    <property type="entry name" value="Ribosomal_L25p"/>
    <property type="match status" value="1"/>
</dbReference>
<dbReference type="Pfam" id="PF14693">
    <property type="entry name" value="Ribosomal_TL5_C"/>
    <property type="match status" value="1"/>
</dbReference>
<dbReference type="SUPFAM" id="SSF50715">
    <property type="entry name" value="Ribosomal protein L25-like"/>
    <property type="match status" value="1"/>
</dbReference>
<gene>
    <name evidence="1" type="primary">rplY</name>
    <name evidence="1" type="synonym">ctc</name>
    <name type="ordered locus">SERP0139</name>
</gene>
<protein>
    <recommendedName>
        <fullName evidence="1">Large ribosomal subunit protein bL25</fullName>
    </recommendedName>
    <alternativeName>
        <fullName evidence="3">50S ribosomal protein L25</fullName>
    </alternativeName>
    <alternativeName>
        <fullName evidence="1">General stress protein CTC</fullName>
    </alternativeName>
</protein>
<sequence>MASLKSIIRQGKQTRSDLKQLRNSGKVPAVVYGYGTKNTSVKVDEVEFIKVIREVGRNGVIDLGVGSKTIKVMVSDYQFDPLKNQITHIDFLAINMSEERTVEVQVQLVGEAVGAKEGGVVEQPLFNLEVTATPENIPETIEVDISELQVNDSLAVSDIKISGDFTIENNPEDSIVTVVPPTDEPSEEEVEAMEGESATEEPEVVGEDKEDDEEENKED</sequence>
<comment type="function">
    <text evidence="1">This is one of the proteins that binds to the 5S RNA in the ribosome where it forms part of the central protuberance.</text>
</comment>
<comment type="subunit">
    <text evidence="1">Part of the 50S ribosomal subunit; part of the 5S rRNA/L5/L18/L25 subcomplex. Contacts the 5S rRNA. Binds to the 5S rRNA independently of L5 and L18.</text>
</comment>
<comment type="similarity">
    <text evidence="1">Belongs to the bacterial ribosomal protein bL25 family. CTC subfamily.</text>
</comment>
<reference key="1">
    <citation type="journal article" date="2005" name="J. Bacteriol.">
        <title>Insights on evolution of virulence and resistance from the complete genome analysis of an early methicillin-resistant Staphylococcus aureus strain and a biofilm-producing methicillin-resistant Staphylococcus epidermidis strain.</title>
        <authorList>
            <person name="Gill S.R."/>
            <person name="Fouts D.E."/>
            <person name="Archer G.L."/>
            <person name="Mongodin E.F."/>
            <person name="DeBoy R.T."/>
            <person name="Ravel J."/>
            <person name="Paulsen I.T."/>
            <person name="Kolonay J.F."/>
            <person name="Brinkac L.M."/>
            <person name="Beanan M.J."/>
            <person name="Dodson R.J."/>
            <person name="Daugherty S.C."/>
            <person name="Madupu R."/>
            <person name="Angiuoli S.V."/>
            <person name="Durkin A.S."/>
            <person name="Haft D.H."/>
            <person name="Vamathevan J.J."/>
            <person name="Khouri H."/>
            <person name="Utterback T.R."/>
            <person name="Lee C."/>
            <person name="Dimitrov G."/>
            <person name="Jiang L."/>
            <person name="Qin H."/>
            <person name="Weidman J."/>
            <person name="Tran K."/>
            <person name="Kang K.H."/>
            <person name="Hance I.R."/>
            <person name="Nelson K.E."/>
            <person name="Fraser C.M."/>
        </authorList>
    </citation>
    <scope>NUCLEOTIDE SEQUENCE [LARGE SCALE GENOMIC DNA]</scope>
    <source>
        <strain>ATCC 35984 / DSM 28319 / BCRC 17069 / CCUG 31568 / BM 3577 / RP62A</strain>
    </source>
</reference>
<name>RL25_STAEQ</name>
<organism>
    <name type="scientific">Staphylococcus epidermidis (strain ATCC 35984 / DSM 28319 / BCRC 17069 / CCUG 31568 / BM 3577 / RP62A)</name>
    <dbReference type="NCBI Taxonomy" id="176279"/>
    <lineage>
        <taxon>Bacteria</taxon>
        <taxon>Bacillati</taxon>
        <taxon>Bacillota</taxon>
        <taxon>Bacilli</taxon>
        <taxon>Bacillales</taxon>
        <taxon>Staphylococcaceae</taxon>
        <taxon>Staphylococcus</taxon>
    </lineage>
</organism>